<keyword id="KW-0963">Cytoplasm</keyword>
<keyword id="KW-0342">GTP-binding</keyword>
<keyword id="KW-0378">Hydrolase</keyword>
<keyword id="KW-0460">Magnesium</keyword>
<keyword id="KW-0479">Metal-binding</keyword>
<keyword id="KW-0547">Nucleotide-binding</keyword>
<keyword id="KW-1185">Reference proteome</keyword>
<name>OBG_SHIDS</name>
<evidence type="ECO:0000255" key="1">
    <source>
        <dbReference type="HAMAP-Rule" id="MF_01454"/>
    </source>
</evidence>
<evidence type="ECO:0000255" key="2">
    <source>
        <dbReference type="PROSITE-ProRule" id="PRU01231"/>
    </source>
</evidence>
<evidence type="ECO:0000256" key="3">
    <source>
        <dbReference type="SAM" id="MobiDB-lite"/>
    </source>
</evidence>
<dbReference type="EC" id="3.6.5.-" evidence="1"/>
<dbReference type="EMBL" id="CP000034">
    <property type="protein sequence ID" value="ABB63355.1"/>
    <property type="molecule type" value="Genomic_DNA"/>
</dbReference>
<dbReference type="RefSeq" id="WP_000673563.1">
    <property type="nucleotide sequence ID" value="NC_007606.1"/>
</dbReference>
<dbReference type="RefSeq" id="YP_404846.1">
    <property type="nucleotide sequence ID" value="NC_007606.1"/>
</dbReference>
<dbReference type="SMR" id="Q32BF0"/>
<dbReference type="STRING" id="300267.SDY_3364"/>
<dbReference type="EnsemblBacteria" id="ABB63355">
    <property type="protein sequence ID" value="ABB63355"/>
    <property type="gene ID" value="SDY_3364"/>
</dbReference>
<dbReference type="KEGG" id="sdy:SDY_3364"/>
<dbReference type="PATRIC" id="fig|300267.13.peg.4018"/>
<dbReference type="HOGENOM" id="CLU_011747_2_0_6"/>
<dbReference type="Proteomes" id="UP000002716">
    <property type="component" value="Chromosome"/>
</dbReference>
<dbReference type="GO" id="GO:0005737">
    <property type="term" value="C:cytoplasm"/>
    <property type="evidence" value="ECO:0007669"/>
    <property type="project" value="UniProtKB-SubCell"/>
</dbReference>
<dbReference type="GO" id="GO:0005525">
    <property type="term" value="F:GTP binding"/>
    <property type="evidence" value="ECO:0007669"/>
    <property type="project" value="UniProtKB-UniRule"/>
</dbReference>
<dbReference type="GO" id="GO:0003924">
    <property type="term" value="F:GTPase activity"/>
    <property type="evidence" value="ECO:0007669"/>
    <property type="project" value="UniProtKB-UniRule"/>
</dbReference>
<dbReference type="GO" id="GO:0000287">
    <property type="term" value="F:magnesium ion binding"/>
    <property type="evidence" value="ECO:0007669"/>
    <property type="project" value="InterPro"/>
</dbReference>
<dbReference type="GO" id="GO:0042254">
    <property type="term" value="P:ribosome biogenesis"/>
    <property type="evidence" value="ECO:0007669"/>
    <property type="project" value="UniProtKB-UniRule"/>
</dbReference>
<dbReference type="CDD" id="cd01898">
    <property type="entry name" value="Obg"/>
    <property type="match status" value="1"/>
</dbReference>
<dbReference type="FunFam" id="2.70.210.12:FF:000001">
    <property type="entry name" value="GTPase Obg"/>
    <property type="match status" value="1"/>
</dbReference>
<dbReference type="FunFam" id="3.40.50.300:FF:000185">
    <property type="entry name" value="GTPase Obg"/>
    <property type="match status" value="1"/>
</dbReference>
<dbReference type="Gene3D" id="2.70.210.12">
    <property type="entry name" value="GTP1/OBG domain"/>
    <property type="match status" value="1"/>
</dbReference>
<dbReference type="Gene3D" id="3.40.50.300">
    <property type="entry name" value="P-loop containing nucleotide triphosphate hydrolases"/>
    <property type="match status" value="1"/>
</dbReference>
<dbReference type="HAMAP" id="MF_01454">
    <property type="entry name" value="GTPase_Obg"/>
    <property type="match status" value="1"/>
</dbReference>
<dbReference type="InterPro" id="IPR031167">
    <property type="entry name" value="G_OBG"/>
</dbReference>
<dbReference type="InterPro" id="IPR006073">
    <property type="entry name" value="GTP-bd"/>
</dbReference>
<dbReference type="InterPro" id="IPR014100">
    <property type="entry name" value="GTP-bd_Obg/CgtA"/>
</dbReference>
<dbReference type="InterPro" id="IPR006074">
    <property type="entry name" value="GTP1-OBG_CS"/>
</dbReference>
<dbReference type="InterPro" id="IPR006169">
    <property type="entry name" value="GTP1_OBG_dom"/>
</dbReference>
<dbReference type="InterPro" id="IPR036726">
    <property type="entry name" value="GTP1_OBG_dom_sf"/>
</dbReference>
<dbReference type="InterPro" id="IPR045086">
    <property type="entry name" value="OBG_GTPase"/>
</dbReference>
<dbReference type="InterPro" id="IPR027417">
    <property type="entry name" value="P-loop_NTPase"/>
</dbReference>
<dbReference type="NCBIfam" id="TIGR02729">
    <property type="entry name" value="Obg_CgtA"/>
    <property type="match status" value="1"/>
</dbReference>
<dbReference type="NCBIfam" id="NF008955">
    <property type="entry name" value="PRK12297.1"/>
    <property type="match status" value="1"/>
</dbReference>
<dbReference type="NCBIfam" id="NF008956">
    <property type="entry name" value="PRK12299.1"/>
    <property type="match status" value="1"/>
</dbReference>
<dbReference type="PANTHER" id="PTHR11702">
    <property type="entry name" value="DEVELOPMENTALLY REGULATED GTP-BINDING PROTEIN-RELATED"/>
    <property type="match status" value="1"/>
</dbReference>
<dbReference type="PANTHER" id="PTHR11702:SF31">
    <property type="entry name" value="MITOCHONDRIAL RIBOSOME-ASSOCIATED GTPASE 2"/>
    <property type="match status" value="1"/>
</dbReference>
<dbReference type="Pfam" id="PF01018">
    <property type="entry name" value="GTP1_OBG"/>
    <property type="match status" value="1"/>
</dbReference>
<dbReference type="Pfam" id="PF01926">
    <property type="entry name" value="MMR_HSR1"/>
    <property type="match status" value="1"/>
</dbReference>
<dbReference type="PIRSF" id="PIRSF002401">
    <property type="entry name" value="GTP_bd_Obg/CgtA"/>
    <property type="match status" value="1"/>
</dbReference>
<dbReference type="PRINTS" id="PR00326">
    <property type="entry name" value="GTP1OBG"/>
</dbReference>
<dbReference type="SUPFAM" id="SSF82051">
    <property type="entry name" value="Obg GTP-binding protein N-terminal domain"/>
    <property type="match status" value="1"/>
</dbReference>
<dbReference type="SUPFAM" id="SSF52540">
    <property type="entry name" value="P-loop containing nucleoside triphosphate hydrolases"/>
    <property type="match status" value="1"/>
</dbReference>
<dbReference type="PROSITE" id="PS51710">
    <property type="entry name" value="G_OBG"/>
    <property type="match status" value="1"/>
</dbReference>
<dbReference type="PROSITE" id="PS00905">
    <property type="entry name" value="GTP1_OBG"/>
    <property type="match status" value="1"/>
</dbReference>
<dbReference type="PROSITE" id="PS51883">
    <property type="entry name" value="OBG"/>
    <property type="match status" value="1"/>
</dbReference>
<gene>
    <name evidence="1" type="primary">obg</name>
    <name type="ordered locus">SDY_3364</name>
</gene>
<protein>
    <recommendedName>
        <fullName evidence="1">GTPase Obg</fullName>
        <ecNumber evidence="1">3.6.5.-</ecNumber>
    </recommendedName>
    <alternativeName>
        <fullName evidence="1">GTP-binding protein Obg</fullName>
    </alternativeName>
</protein>
<organism>
    <name type="scientific">Shigella dysenteriae serotype 1 (strain Sd197)</name>
    <dbReference type="NCBI Taxonomy" id="300267"/>
    <lineage>
        <taxon>Bacteria</taxon>
        <taxon>Pseudomonadati</taxon>
        <taxon>Pseudomonadota</taxon>
        <taxon>Gammaproteobacteria</taxon>
        <taxon>Enterobacterales</taxon>
        <taxon>Enterobacteriaceae</taxon>
        <taxon>Shigella</taxon>
    </lineage>
</organism>
<feature type="chain" id="PRO_0000386256" description="GTPase Obg">
    <location>
        <begin position="1"/>
        <end position="390"/>
    </location>
</feature>
<feature type="domain" description="Obg" evidence="2">
    <location>
        <begin position="1"/>
        <end position="159"/>
    </location>
</feature>
<feature type="domain" description="OBG-type G" evidence="1">
    <location>
        <begin position="160"/>
        <end position="333"/>
    </location>
</feature>
<feature type="region of interest" description="Disordered" evidence="3">
    <location>
        <begin position="127"/>
        <end position="147"/>
    </location>
</feature>
<feature type="compositionally biased region" description="Polar residues" evidence="3">
    <location>
        <begin position="129"/>
        <end position="145"/>
    </location>
</feature>
<feature type="binding site" evidence="1">
    <location>
        <begin position="166"/>
        <end position="173"/>
    </location>
    <ligand>
        <name>GTP</name>
        <dbReference type="ChEBI" id="CHEBI:37565"/>
    </ligand>
</feature>
<feature type="binding site" evidence="1">
    <location>
        <position position="173"/>
    </location>
    <ligand>
        <name>Mg(2+)</name>
        <dbReference type="ChEBI" id="CHEBI:18420"/>
    </ligand>
</feature>
<feature type="binding site" evidence="1">
    <location>
        <begin position="191"/>
        <end position="195"/>
    </location>
    <ligand>
        <name>GTP</name>
        <dbReference type="ChEBI" id="CHEBI:37565"/>
    </ligand>
</feature>
<feature type="binding site" evidence="1">
    <location>
        <position position="193"/>
    </location>
    <ligand>
        <name>Mg(2+)</name>
        <dbReference type="ChEBI" id="CHEBI:18420"/>
    </ligand>
</feature>
<feature type="binding site" evidence="1">
    <location>
        <begin position="213"/>
        <end position="216"/>
    </location>
    <ligand>
        <name>GTP</name>
        <dbReference type="ChEBI" id="CHEBI:37565"/>
    </ligand>
</feature>
<feature type="binding site" evidence="1">
    <location>
        <begin position="283"/>
        <end position="286"/>
    </location>
    <ligand>
        <name>GTP</name>
        <dbReference type="ChEBI" id="CHEBI:37565"/>
    </ligand>
</feature>
<feature type="binding site" evidence="1">
    <location>
        <begin position="314"/>
        <end position="316"/>
    </location>
    <ligand>
        <name>GTP</name>
        <dbReference type="ChEBI" id="CHEBI:37565"/>
    </ligand>
</feature>
<proteinExistence type="inferred from homology"/>
<reference key="1">
    <citation type="journal article" date="2005" name="Nucleic Acids Res.">
        <title>Genome dynamics and diversity of Shigella species, the etiologic agents of bacillary dysentery.</title>
        <authorList>
            <person name="Yang F."/>
            <person name="Yang J."/>
            <person name="Zhang X."/>
            <person name="Chen L."/>
            <person name="Jiang Y."/>
            <person name="Yan Y."/>
            <person name="Tang X."/>
            <person name="Wang J."/>
            <person name="Xiong Z."/>
            <person name="Dong J."/>
            <person name="Xue Y."/>
            <person name="Zhu Y."/>
            <person name="Xu X."/>
            <person name="Sun L."/>
            <person name="Chen S."/>
            <person name="Nie H."/>
            <person name="Peng J."/>
            <person name="Xu J."/>
            <person name="Wang Y."/>
            <person name="Yuan Z."/>
            <person name="Wen Y."/>
            <person name="Yao Z."/>
            <person name="Shen Y."/>
            <person name="Qiang B."/>
            <person name="Hou Y."/>
            <person name="Yu J."/>
            <person name="Jin Q."/>
        </authorList>
    </citation>
    <scope>NUCLEOTIDE SEQUENCE [LARGE SCALE GENOMIC DNA]</scope>
    <source>
        <strain>Sd197</strain>
    </source>
</reference>
<comment type="function">
    <text evidence="1">An essential GTPase which binds GTP, GDP and possibly (p)ppGpp with moderate affinity, with high nucleotide exchange rates and a fairly low GTP hydrolysis rate. Plays a role in control of the cell cycle, stress response, ribosome biogenesis and in those bacteria that undergo differentiation, in morphogenesis control.</text>
</comment>
<comment type="cofactor">
    <cofactor evidence="1">
        <name>Mg(2+)</name>
        <dbReference type="ChEBI" id="CHEBI:18420"/>
    </cofactor>
</comment>
<comment type="subunit">
    <text evidence="1">Monomer.</text>
</comment>
<comment type="subcellular location">
    <subcellularLocation>
        <location evidence="1">Cytoplasm</location>
    </subcellularLocation>
</comment>
<comment type="similarity">
    <text evidence="1">Belongs to the TRAFAC class OBG-HflX-like GTPase superfamily. OBG GTPase family.</text>
</comment>
<sequence length="390" mass="43272">MKFVDEASILVVAGDGGNGCVSFRREKYIPKGGPDGGDGGDGGDVWMEADENLNTLIDYRFEKSFRAERGQNGASRDCTGKRGKDVTIKVPVGTRVIDQGTGETMGDMTKHGQRLLVAKGGWHGLGNTRFKSSVNRTPRQKTNGTPGDKRELLLELMLLADVGMLGMPNAGKSTFIRAVSAAKPKVADYPFTTLVPSLGVVRMDNEKSFVVADIPGLIEGAAEGAGLGIRFLKHLERCRVLLHLIDIDPIDGTDPVENARIIISELEKYSQDLAAKPRWLVFNKIDLLDKAEAEEKAKAIAEALGWEDKYYLISAASGLGVKDLCWDVMTFIIENPVVQDEEAKQPEKVEFMWDDYHRQQLEEIAEEDDEDWDDDWDEDDEEGVEFIYKR</sequence>
<accession>Q32BF0</accession>